<feature type="chain" id="PRO_0000215719" description="ATP-dependent Clp protease adapter protein ClpS">
    <location>
        <begin position="1"/>
        <end position="111"/>
    </location>
</feature>
<sequence length="111" mass="12750">MSRQNLEEIIQTGIADTELSTEISTAIKRPRKYKVLLLNDDYTPMDFVVEVLKHFFHLNEEVAIQVMLQVHFQGKGVCGVFTRDIAETKVALVNEYARMNQHPLLSSMEPE</sequence>
<protein>
    <recommendedName>
        <fullName evidence="1">ATP-dependent Clp protease adapter protein ClpS</fullName>
    </recommendedName>
</protein>
<dbReference type="EMBL" id="CR628337">
    <property type="protein sequence ID" value="CAH15084.1"/>
    <property type="molecule type" value="Genomic_DNA"/>
</dbReference>
<dbReference type="RefSeq" id="WP_011215007.1">
    <property type="nucleotide sequence ID" value="NC_006369.1"/>
</dbReference>
<dbReference type="SMR" id="Q5WY89"/>
<dbReference type="KEGG" id="lpf:lpl0850"/>
<dbReference type="LegioList" id="lpl0850"/>
<dbReference type="HOGENOM" id="CLU_134358_2_1_6"/>
<dbReference type="Proteomes" id="UP000002517">
    <property type="component" value="Chromosome"/>
</dbReference>
<dbReference type="GO" id="GO:0030163">
    <property type="term" value="P:protein catabolic process"/>
    <property type="evidence" value="ECO:0007669"/>
    <property type="project" value="InterPro"/>
</dbReference>
<dbReference type="GO" id="GO:0006508">
    <property type="term" value="P:proteolysis"/>
    <property type="evidence" value="ECO:0007669"/>
    <property type="project" value="UniProtKB-UniRule"/>
</dbReference>
<dbReference type="FunFam" id="3.30.1390.10:FF:000002">
    <property type="entry name" value="ATP-dependent Clp protease adapter protein ClpS"/>
    <property type="match status" value="1"/>
</dbReference>
<dbReference type="Gene3D" id="3.30.1390.10">
    <property type="match status" value="1"/>
</dbReference>
<dbReference type="HAMAP" id="MF_00302">
    <property type="entry name" value="ClpS"/>
    <property type="match status" value="1"/>
</dbReference>
<dbReference type="InterPro" id="IPR022935">
    <property type="entry name" value="ClpS"/>
</dbReference>
<dbReference type="InterPro" id="IPR003769">
    <property type="entry name" value="ClpS_core"/>
</dbReference>
<dbReference type="InterPro" id="IPR014719">
    <property type="entry name" value="Ribosomal_bL12_C/ClpS-like"/>
</dbReference>
<dbReference type="NCBIfam" id="NF000672">
    <property type="entry name" value="PRK00033.1-5"/>
    <property type="match status" value="1"/>
</dbReference>
<dbReference type="PANTHER" id="PTHR33473:SF19">
    <property type="entry name" value="ATP-DEPENDENT CLP PROTEASE ADAPTER PROTEIN CLPS"/>
    <property type="match status" value="1"/>
</dbReference>
<dbReference type="PANTHER" id="PTHR33473">
    <property type="entry name" value="ATP-DEPENDENT CLP PROTEASE ADAPTER PROTEIN CLPS1, CHLOROPLASTIC"/>
    <property type="match status" value="1"/>
</dbReference>
<dbReference type="Pfam" id="PF02617">
    <property type="entry name" value="ClpS"/>
    <property type="match status" value="1"/>
</dbReference>
<dbReference type="SUPFAM" id="SSF54736">
    <property type="entry name" value="ClpS-like"/>
    <property type="match status" value="1"/>
</dbReference>
<name>CLPS_LEGPL</name>
<accession>Q5WY89</accession>
<gene>
    <name evidence="1" type="primary">clpS</name>
    <name type="ordered locus">lpl0850</name>
</gene>
<organism>
    <name type="scientific">Legionella pneumophila (strain Lens)</name>
    <dbReference type="NCBI Taxonomy" id="297245"/>
    <lineage>
        <taxon>Bacteria</taxon>
        <taxon>Pseudomonadati</taxon>
        <taxon>Pseudomonadota</taxon>
        <taxon>Gammaproteobacteria</taxon>
        <taxon>Legionellales</taxon>
        <taxon>Legionellaceae</taxon>
        <taxon>Legionella</taxon>
    </lineage>
</organism>
<proteinExistence type="inferred from homology"/>
<reference key="1">
    <citation type="journal article" date="2004" name="Nat. Genet.">
        <title>Evidence in the Legionella pneumophila genome for exploitation of host cell functions and high genome plasticity.</title>
        <authorList>
            <person name="Cazalet C."/>
            <person name="Rusniok C."/>
            <person name="Brueggemann H."/>
            <person name="Zidane N."/>
            <person name="Magnier A."/>
            <person name="Ma L."/>
            <person name="Tichit M."/>
            <person name="Jarraud S."/>
            <person name="Bouchier C."/>
            <person name="Vandenesch F."/>
            <person name="Kunst F."/>
            <person name="Etienne J."/>
            <person name="Glaser P."/>
            <person name="Buchrieser C."/>
        </authorList>
    </citation>
    <scope>NUCLEOTIDE SEQUENCE [LARGE SCALE GENOMIC DNA]</scope>
    <source>
        <strain>Lens</strain>
    </source>
</reference>
<evidence type="ECO:0000255" key="1">
    <source>
        <dbReference type="HAMAP-Rule" id="MF_00302"/>
    </source>
</evidence>
<comment type="function">
    <text evidence="1">Involved in the modulation of the specificity of the ClpAP-mediated ATP-dependent protein degradation.</text>
</comment>
<comment type="subunit">
    <text evidence="1">Binds to the N-terminal domain of the chaperone ClpA.</text>
</comment>
<comment type="similarity">
    <text evidence="1">Belongs to the ClpS family.</text>
</comment>